<comment type="function">
    <text evidence="2 3 5">Antimicrobial peptide that exhibits broad-spectrum antimicrobial activity against both Gram-positive and Gram-negative bacteria (PubMed:11738089, PubMed:15635634, PubMed:25530580). Also shows antifungal activities (PubMed:24472551). Exhibits potent activity in stimulating degranulation from rat peritoneal mast cells but not from RBL-2H3 cells (PubMed:11738089). Has little or no hemolytic activity towards human erythrocytes (PubMed:15635634, PubMed:25530580).</text>
</comment>
<comment type="subunit">
    <text>A n-merization is probable.</text>
</comment>
<comment type="subcellular location">
    <subcellularLocation>
        <location evidence="1">Secreted</location>
    </subcellularLocation>
</comment>
<comment type="tissue specificity">
    <text evidence="10">Expressed by the venom gland.</text>
</comment>
<comment type="PTM">
    <text evidence="4">The C-terminal amidation is crucial for activity, since the carboxylated peptide has antimicrobial and mast cell degranulation activities drastically reduced compared to amidated peptide. However, the carboxylated peptide has no hemolytic activity, like the amidated peptide.</text>
</comment>
<comment type="mass spectrometry" mass="1153.8" method="MALDI" evidence="2"/>
<comment type="mass spectrometry" mass="1153.3" method="MALDI" evidence="3"/>
<reference key="1">
    <citation type="journal article" date="2000" name="Rapid Commun. Mass Spectrom.">
        <title>Advantages of using nested collision induced dissociation/post-source decay with matrix-assisted laser desorption/ionization time-of-flight mass spectrometry: sequencing of novel peptides from wasp venom.</title>
        <authorList>
            <person name="Hisada M."/>
            <person name="Konno K."/>
            <person name="Itagaki Y."/>
            <person name="Naoki H."/>
            <person name="Nakajima T."/>
        </authorList>
    </citation>
    <scope>PROTEIN SEQUENCE</scope>
    <scope>AMIDATION AT LEU-10</scope>
    <scope>SUBCELLULAR LOCATION</scope>
    <scope>SYNTHESIS</scope>
    <scope>IDENTIFICATION BY MASS SPECTROMETRY</scope>
    <source>
        <tissue>Venom</tissue>
    </source>
</reference>
<reference key="2">
    <citation type="journal article" date="2001" name="Biochim. Biophys. Acta">
        <title>Anoplin, a novel antimicrobial peptide from the venom of the solitary wasp Anoplius samariensis.</title>
        <authorList>
            <person name="Konno K."/>
            <person name="Hisada M."/>
            <person name="Fontana R."/>
            <person name="Lorenzi C.C.B."/>
            <person name="Naoki H."/>
            <person name="Itagaki Y."/>
            <person name="Miwa A."/>
            <person name="Kawai N."/>
            <person name="Nakata Y."/>
            <person name="Yasuhara T."/>
            <person name="Ruggiero Neto J."/>
            <person name="de Azevedo W.F. Jr."/>
            <person name="Palma M.S."/>
            <person name="Nakajima T."/>
        </authorList>
    </citation>
    <scope>PROTEIN SEQUENCE</scope>
    <scope>SYNTHESIS</scope>
    <scope>MASS SPECTROMETRY</scope>
    <scope>FUNCTION</scope>
    <scope>MOLECULAR MODELING</scope>
    <source>
        <tissue>Venom</tissue>
    </source>
</reference>
<reference key="3">
    <citation type="journal article" date="2005" name="J. Pept. Sci.">
        <title>Structure-activity relationship study of anoplin.</title>
        <authorList>
            <person name="Ifrah D."/>
            <person name="Doisy X."/>
            <person name="Ryge T.S."/>
            <person name="Hansen P.R."/>
        </authorList>
    </citation>
    <scope>PROTEIN SEQUENCE</scope>
    <scope>FUNCTION</scope>
    <scope>SYNTHESIS</scope>
    <scope>MASS SPECTROMETRY</scope>
    <scope>MUTAGENESIS OF GLY-1; LEU-2; LEU-3; LYS-4; ARG-5; ILE-6; LYS-7; THR-8; LEU-9 AND LEU-10</scope>
    <source>
        <tissue>Venom</tissue>
    </source>
</reference>
<reference key="4">
    <citation type="journal article" date="2008" name="J. Pept. Sci.">
        <title>Study of the mechanism of action of anoplin, a helical antimicrobial decapeptide with ion channel-like activity, and the role of the amidated C-terminus.</title>
        <authorList>
            <person name="Dos Santos Cabrera M.P."/>
            <person name="Arcisio-Miranda M."/>
            <person name="Broggio Costa S.T."/>
            <person name="Konno K."/>
            <person name="Ruggiero J.R."/>
            <person name="Procopio J."/>
            <person name="Ruggiero Neto J."/>
        </authorList>
    </citation>
    <scope>SYNTHESIS WITH AND WITHOUT AMIDATION</scope>
</reference>
<reference key="5">
    <citation type="journal article" date="2014" name="Biochem. Biophys. Res. Commun.">
        <title>Novel properties of antimicrobial peptide anoplin.</title>
        <authorList>
            <person name="Jindrichova B."/>
            <person name="Burketova L."/>
            <person name="Novotna Z."/>
        </authorList>
    </citation>
    <scope>FUNCTION ON FUNGUS</scope>
</reference>
<reference key="6">
    <citation type="journal article" date="2016" name="Toxins">
        <title>Peptide toxins in solitary wasp venoms.</title>
        <authorList>
            <person name="Konno K."/>
            <person name="Kazuma K."/>
            <person name="Nihei K."/>
        </authorList>
    </citation>
    <scope>REVIEW</scope>
</reference>
<reference key="7">
    <citation type="journal article" date="2015" name="ChemBioChem">
        <title>Rational design of alpha-helical antimicrobial peptides: do's and don'ts.</title>
        <authorList>
            <person name="Uggerhoej L.E."/>
            <person name="Poulsen T.J."/>
            <person name="Munk J.K."/>
            <person name="Fredborg M."/>
            <person name="Sondergaard T.E."/>
            <person name="Frimodt-Moller N."/>
            <person name="Hansen P.R."/>
            <person name="Wimmer R."/>
        </authorList>
    </citation>
    <scope>STRUCTURE BY NMR OF WILD-TYPE AND MUTANTS</scope>
    <scope>MUTAGENESIS OF ARG-5 AND THR-8</scope>
    <scope>FUNCTION</scope>
</reference>
<name>ANOP_ANOSM</name>
<sequence length="10" mass="1155">GLLKRIKTLL</sequence>
<accession>P0C005</accession>
<protein>
    <recommendedName>
        <fullName evidence="7 8 9">Anoplin</fullName>
        <shortName evidence="9">ANP</shortName>
    </recommendedName>
    <alternativeName>
        <fullName evidence="6">As-183</fullName>
    </alternativeName>
</protein>
<dbReference type="PDB" id="2MJQ">
    <property type="method" value="NMR"/>
    <property type="chains" value="A=1-10"/>
</dbReference>
<dbReference type="PDB" id="2MJR">
    <property type="method" value="NMR"/>
    <property type="chains" value="A=1-10"/>
</dbReference>
<dbReference type="PDB" id="2MJS">
    <property type="method" value="NMR"/>
    <property type="chains" value="A=1-10"/>
</dbReference>
<dbReference type="PDB" id="2MJT">
    <property type="method" value="NMR"/>
    <property type="chains" value="A=1-10"/>
</dbReference>
<dbReference type="PDBsum" id="2MJQ"/>
<dbReference type="PDBsum" id="2MJR"/>
<dbReference type="PDBsum" id="2MJS"/>
<dbReference type="PDBsum" id="2MJT"/>
<dbReference type="BMRB" id="P0C005"/>
<dbReference type="SMR" id="P0C005"/>
<dbReference type="EvolutionaryTrace" id="P0C005"/>
<dbReference type="GO" id="GO:0005576">
    <property type="term" value="C:extracellular region"/>
    <property type="evidence" value="ECO:0007669"/>
    <property type="project" value="UniProtKB-SubCell"/>
</dbReference>
<dbReference type="GO" id="GO:0042742">
    <property type="term" value="P:defense response to bacterium"/>
    <property type="evidence" value="ECO:0007669"/>
    <property type="project" value="UniProtKB-KW"/>
</dbReference>
<dbReference type="GO" id="GO:0050832">
    <property type="term" value="P:defense response to fungus"/>
    <property type="evidence" value="ECO:0007669"/>
    <property type="project" value="UniProtKB-KW"/>
</dbReference>
<dbReference type="GO" id="GO:0031640">
    <property type="term" value="P:killing of cells of another organism"/>
    <property type="evidence" value="ECO:0007669"/>
    <property type="project" value="UniProtKB-KW"/>
</dbReference>
<organism>
    <name type="scientific">Anoplius samariensis</name>
    <name type="common">Solitary wasp</name>
    <dbReference type="NCBI Taxonomy" id="200614"/>
    <lineage>
        <taxon>Eukaryota</taxon>
        <taxon>Metazoa</taxon>
        <taxon>Ecdysozoa</taxon>
        <taxon>Arthropoda</taxon>
        <taxon>Hexapoda</taxon>
        <taxon>Insecta</taxon>
        <taxon>Pterygota</taxon>
        <taxon>Neoptera</taxon>
        <taxon>Endopterygota</taxon>
        <taxon>Hymenoptera</taxon>
        <taxon>Apocrita</taxon>
        <taxon>Aculeata</taxon>
        <taxon>Pompiloidea</taxon>
        <taxon>Pompilidae</taxon>
        <taxon>Pompilinae</taxon>
        <taxon>Anoplius</taxon>
    </lineage>
</organism>
<evidence type="ECO:0000269" key="1">
    <source>
    </source>
</evidence>
<evidence type="ECO:0000269" key="2">
    <source>
    </source>
</evidence>
<evidence type="ECO:0000269" key="3">
    <source>
    </source>
</evidence>
<evidence type="ECO:0000269" key="4">
    <source>
    </source>
</evidence>
<evidence type="ECO:0000269" key="5">
    <source>
    </source>
</evidence>
<evidence type="ECO:0000303" key="6">
    <source>
    </source>
</evidence>
<evidence type="ECO:0000303" key="7">
    <source>
    </source>
</evidence>
<evidence type="ECO:0000303" key="8">
    <source>
    </source>
</evidence>
<evidence type="ECO:0000303" key="9">
    <source>
    </source>
</evidence>
<evidence type="ECO:0000305" key="10">
    <source>
    </source>
</evidence>
<evidence type="ECO:0007829" key="11">
    <source>
        <dbReference type="PDB" id="2MJQ"/>
    </source>
</evidence>
<keyword id="KW-0002">3D-structure</keyword>
<keyword id="KW-0027">Amidation</keyword>
<keyword id="KW-0044">Antibiotic</keyword>
<keyword id="KW-0929">Antimicrobial</keyword>
<keyword id="KW-0903">Direct protein sequencing</keyword>
<keyword id="KW-0295">Fungicide</keyword>
<keyword id="KW-0964">Secreted</keyword>
<feature type="peptide" id="PRO_0000044108" description="Anoplin" evidence="1">
    <location>
        <begin position="1"/>
        <end position="10"/>
    </location>
</feature>
<feature type="modified residue" description="Leucine amide" evidence="1">
    <location>
        <position position="10"/>
    </location>
</feature>
<feature type="mutagenesis site" description="Decrease in antimicrobial activity, but no change in hemolytic activity." evidence="3">
    <original>G</original>
    <variation>A</variation>
    <location>
        <position position="1"/>
    </location>
</feature>
<feature type="mutagenesis site" description="Decrease in antimicrobial activity." evidence="3">
    <original>G</original>
    <variation>K</variation>
    <location>
        <position position="1"/>
    </location>
</feature>
<feature type="mutagenesis site" description="Decrease in antimicrobial activity, but no change in hemolytic activity." evidence="3">
    <original>L</original>
    <variation>A</variation>
    <location>
        <position position="2"/>
    </location>
</feature>
<feature type="mutagenesis site" description="Decrease in antimicrobial activity, but no change in hemolytic activity." evidence="3">
    <original>L</original>
    <variation>A</variation>
    <location>
        <position position="3"/>
    </location>
</feature>
<feature type="mutagenesis site" description="Decrease in antimicrobial activity against S.aureus and better against E.coli and no change in hemolytic activity." evidence="3">
    <original>K</original>
    <variation>A</variation>
    <location>
        <position position="4"/>
    </location>
</feature>
<feature type="mutagenesis site" description="Increase in antimicrobial activity and gain in hemolytic activity." evidence="3">
    <original>R</original>
    <variation>A</variation>
    <variation>I</variation>
    <variation>L</variation>
    <location>
        <position position="5"/>
    </location>
</feature>
<feature type="mutagenesis site" description="Increase in antimicrobial activity and gain in hemolytic activity. In R5F/T8W; gain in hemolytic activity (EC(50)=2 uM)." evidence="3 5">
    <original>R</original>
    <variation>F</variation>
    <location>
        <position position="5"/>
    </location>
</feature>
<feature type="mutagenesis site" description="Decrease in antimicrobial activity, but no change in hemolytic activity. In R5K/T8W; In R5K/T8W; Increase in antimicrobial activity and gain in hemolytic activity (EC(50)=130 uM)." evidence="3 5">
    <original>R</original>
    <variation>K</variation>
    <location>
        <position position="5"/>
    </location>
</feature>
<feature type="mutagenesis site" description="Decrease in antimicrobial activity, but no change in hemolytic activity." evidence="3">
    <original>R</original>
    <variation>N</variation>
    <location>
        <position position="5"/>
    </location>
</feature>
<feature type="mutagenesis site" description="Increase in antimicrobial activity and gain in hemolytic activity (EC(50)=20 uM)." evidence="3 5">
    <original>R</original>
    <variation>W</variation>
    <location>
        <position position="5"/>
    </location>
</feature>
<feature type="mutagenesis site" description="Decrease in antimicrobial activity, but no change in hemolytic activity." evidence="3">
    <original>I</original>
    <variation>A</variation>
    <location>
        <position position="6"/>
    </location>
</feature>
<feature type="mutagenesis site" description="Increase in antimicrobial activity and gain in hemolytic activity." evidence="3">
    <original>K</original>
    <variation>A</variation>
    <location>
        <position position="7"/>
    </location>
</feature>
<feature type="mutagenesis site" description="Increase in antimicrobial activity and gain in hemolytic activity." evidence="3">
    <original>T</original>
    <variation>A</variation>
    <variation>F</variation>
    <variation>I</variation>
    <variation>L</variation>
    <location>
        <position position="8"/>
    </location>
</feature>
<feature type="mutagenesis site" description="Increase in antimicrobial activity and gain of low hemolytic activity." evidence="3">
    <original>T</original>
    <variation>K</variation>
    <location>
        <position position="8"/>
    </location>
</feature>
<feature type="mutagenesis site" description="Increase in antimicrobial activity, but no change in hemolytic activity." evidence="3">
    <original>T</original>
    <variation>N</variation>
    <location>
        <position position="8"/>
    </location>
</feature>
<feature type="mutagenesis site" description="Decrease in antimicrobial activity against S.aureus and better against E.coli and gain in hemolytic activity." evidence="3">
    <original>T</original>
    <variation>V</variation>
    <location>
        <position position="8"/>
    </location>
</feature>
<feature type="mutagenesis site" description="Increase in antimicrobial activity and gain in hemolytic activity. In R5F/T8W; gain in hemolytic activity (EC(50)=2 uM). In R5K/T8W; Increase in antimicrobial activity and gain in hemolytic activity (EC(50)=130 uM)." evidence="3 5">
    <original>T</original>
    <variation>W</variation>
    <location>
        <position position="8"/>
    </location>
</feature>
<feature type="mutagenesis site" description="Decrease in antimicrobial activity, but no change in hemolytic activity." evidence="3">
    <original>L</original>
    <variation>A</variation>
    <location>
        <position position="9"/>
    </location>
</feature>
<feature type="mutagenesis site" description="Decrease in antimicrobial activity, but no change in hemolytic activity." evidence="3">
    <original>L</original>
    <variation>A</variation>
    <location>
        <position position="10"/>
    </location>
</feature>
<feature type="helix" evidence="11">
    <location>
        <begin position="2"/>
        <end position="9"/>
    </location>
</feature>
<proteinExistence type="evidence at protein level"/>